<sequence length="557" mass="62388">MALSTFKREHIKKNLRNDEYDLVIIGGGITGAGIALDASERGMKVALVEMQDFAQGTSSRSTKLVHGGLRYLKQFQIGVVAETGKERAIVYENGPHVTTPEWMLLPMHKGGTFGKFSTSIGLGMYDRLAGVKKSERKKMLSKKETLAKEPLVKKEGLKGGGYYVEYRTDDARLTIEVMKRAAEKGAEIINYTKSEHFTYDKNQQVNGVKVIDKLTNENYTIKAKKVVNAAGPWVDDVRSGDYARNNKKLRLTKGVHVVIDQSKFPLGQAVYFDTEKDGRMIFAIPREGKAYVGTTDTFYDNIKSSPLTTQEDRDYLIDAINYMFPSVNVTDEDIESTWAGIRPLIYEEGKDPSEISRKDEIWEGKSGLLTIAGGKLTGYRHMAQDIVDLVSKRLKKDYGLTFSPCNTKGLAISGGDVGGSKNFDAFVEQKVDVAKGFGIDEDVARRLASKYGSNVDELFNIAQTSQYHDSKLPLEIYVELVYSIQQEMVYKPNDFLVRRSGKMYFNIKDVLDYKDAVIDIMADMLDYSPAQIEAYTEEVEQAIKEAQHGNNQPAVKE</sequence>
<keyword id="KW-0963">Cytoplasm</keyword>
<keyword id="KW-0274">FAD</keyword>
<keyword id="KW-0285">Flavoprotein</keyword>
<keyword id="KW-0319">Glycerol metabolism</keyword>
<keyword id="KW-0560">Oxidoreductase</keyword>
<keyword id="KW-1185">Reference proteome</keyword>
<reference key="1">
    <citation type="book" date="2006" name="Gram positive pathogens, 2nd edition">
        <title>The Staphylococcus aureus NCTC 8325 genome.</title>
        <editorList>
            <person name="Fischetti V."/>
            <person name="Novick R."/>
            <person name="Ferretti J."/>
            <person name="Portnoy D."/>
            <person name="Rood J."/>
        </editorList>
        <authorList>
            <person name="Gillaspy A.F."/>
            <person name="Worrell V."/>
            <person name="Orvis J."/>
            <person name="Roe B.A."/>
            <person name="Dyer D.W."/>
            <person name="Iandolo J.J."/>
        </authorList>
    </citation>
    <scope>NUCLEOTIDE SEQUENCE [LARGE SCALE GENOMIC DNA]</scope>
    <source>
        <strain>NCTC 8325 / PS 47</strain>
    </source>
</reference>
<protein>
    <recommendedName>
        <fullName>Aerobic glycerol-3-phosphate dehydrogenase</fullName>
        <ecNumber>1.1.5.3</ecNumber>
    </recommendedName>
</protein>
<organism>
    <name type="scientific">Staphylococcus aureus (strain NCTC 8325 / PS 47)</name>
    <dbReference type="NCBI Taxonomy" id="93061"/>
    <lineage>
        <taxon>Bacteria</taxon>
        <taxon>Bacillati</taxon>
        <taxon>Bacillota</taxon>
        <taxon>Bacilli</taxon>
        <taxon>Bacillales</taxon>
        <taxon>Staphylococcaceae</taxon>
        <taxon>Staphylococcus</taxon>
    </lineage>
</organism>
<comment type="catalytic activity">
    <reaction>
        <text>a quinone + sn-glycerol 3-phosphate = dihydroxyacetone phosphate + a quinol</text>
        <dbReference type="Rhea" id="RHEA:18977"/>
        <dbReference type="ChEBI" id="CHEBI:24646"/>
        <dbReference type="ChEBI" id="CHEBI:57597"/>
        <dbReference type="ChEBI" id="CHEBI:57642"/>
        <dbReference type="ChEBI" id="CHEBI:132124"/>
        <dbReference type="EC" id="1.1.5.3"/>
    </reaction>
</comment>
<comment type="cofactor">
    <cofactor evidence="1">
        <name>FAD</name>
        <dbReference type="ChEBI" id="CHEBI:57692"/>
    </cofactor>
</comment>
<comment type="pathway">
    <text>Polyol metabolism; glycerol degradation via glycerol kinase pathway; glycerone phosphate from sn-glycerol 3-phosphate (aerobic route): step 1/1.</text>
</comment>
<comment type="subcellular location">
    <subcellularLocation>
        <location evidence="1">Cytoplasm</location>
    </subcellularLocation>
</comment>
<comment type="similarity">
    <text evidence="3">Belongs to the FAD-dependent glycerol-3-phosphate dehydrogenase family.</text>
</comment>
<name>GLPD_STAA8</name>
<dbReference type="EC" id="1.1.5.3"/>
<dbReference type="EMBL" id="CP000253">
    <property type="protein sequence ID" value="ABD30378.1"/>
    <property type="molecule type" value="Genomic_DNA"/>
</dbReference>
<dbReference type="RefSeq" id="WP_001218596.1">
    <property type="nucleotide sequence ID" value="NZ_LS483365.1"/>
</dbReference>
<dbReference type="RefSeq" id="YP_499810.1">
    <property type="nucleotide sequence ID" value="NC_007795.1"/>
</dbReference>
<dbReference type="SMR" id="Q2FYZ4"/>
<dbReference type="STRING" id="93061.SAOUHSC_01278"/>
<dbReference type="PaxDb" id="1280-SAXN108_1306"/>
<dbReference type="GeneID" id="3919930"/>
<dbReference type="KEGG" id="sao:SAOUHSC_01278"/>
<dbReference type="PATRIC" id="fig|93061.5.peg.1171"/>
<dbReference type="eggNOG" id="COG0578">
    <property type="taxonomic scope" value="Bacteria"/>
</dbReference>
<dbReference type="HOGENOM" id="CLU_015740_5_2_9"/>
<dbReference type="OrthoDB" id="9766796at2"/>
<dbReference type="UniPathway" id="UPA00618">
    <property type="reaction ID" value="UER00674"/>
</dbReference>
<dbReference type="PRO" id="PR:Q2FYZ4"/>
<dbReference type="Proteomes" id="UP000008816">
    <property type="component" value="Chromosome"/>
</dbReference>
<dbReference type="GO" id="GO:0005737">
    <property type="term" value="C:cytoplasm"/>
    <property type="evidence" value="ECO:0007669"/>
    <property type="project" value="UniProtKB-SubCell"/>
</dbReference>
<dbReference type="GO" id="GO:0004368">
    <property type="term" value="F:glycerol-3-phosphate dehydrogenase (quinone) activity"/>
    <property type="evidence" value="ECO:0000318"/>
    <property type="project" value="GO_Central"/>
</dbReference>
<dbReference type="GO" id="GO:0019563">
    <property type="term" value="P:glycerol catabolic process"/>
    <property type="evidence" value="ECO:0007669"/>
    <property type="project" value="UniProtKB-UniPathway"/>
</dbReference>
<dbReference type="GO" id="GO:0046168">
    <property type="term" value="P:glycerol-3-phosphate catabolic process"/>
    <property type="evidence" value="ECO:0000318"/>
    <property type="project" value="GO_Central"/>
</dbReference>
<dbReference type="Gene3D" id="1.10.8.870">
    <property type="entry name" value="Alpha-glycerophosphate oxidase, cap domain"/>
    <property type="match status" value="1"/>
</dbReference>
<dbReference type="Gene3D" id="3.30.9.10">
    <property type="entry name" value="D-Amino Acid Oxidase, subunit A, domain 2"/>
    <property type="match status" value="1"/>
</dbReference>
<dbReference type="Gene3D" id="3.50.50.60">
    <property type="entry name" value="FAD/NAD(P)-binding domain"/>
    <property type="match status" value="1"/>
</dbReference>
<dbReference type="InterPro" id="IPR031656">
    <property type="entry name" value="DAO_C"/>
</dbReference>
<dbReference type="InterPro" id="IPR038299">
    <property type="entry name" value="DAO_C_sf"/>
</dbReference>
<dbReference type="InterPro" id="IPR006076">
    <property type="entry name" value="FAD-dep_OxRdtase"/>
</dbReference>
<dbReference type="InterPro" id="IPR036188">
    <property type="entry name" value="FAD/NAD-bd_sf"/>
</dbReference>
<dbReference type="InterPro" id="IPR000447">
    <property type="entry name" value="G3P_DH_FAD-dep"/>
</dbReference>
<dbReference type="PANTHER" id="PTHR11985:SF35">
    <property type="entry name" value="ANAEROBIC GLYCEROL-3-PHOSPHATE DEHYDROGENASE SUBUNIT A"/>
    <property type="match status" value="1"/>
</dbReference>
<dbReference type="PANTHER" id="PTHR11985">
    <property type="entry name" value="GLYCEROL-3-PHOSPHATE DEHYDROGENASE"/>
    <property type="match status" value="1"/>
</dbReference>
<dbReference type="Pfam" id="PF01266">
    <property type="entry name" value="DAO"/>
    <property type="match status" value="1"/>
</dbReference>
<dbReference type="Pfam" id="PF16901">
    <property type="entry name" value="DAO_C"/>
    <property type="match status" value="1"/>
</dbReference>
<dbReference type="PRINTS" id="PR01001">
    <property type="entry name" value="FADG3PDH"/>
</dbReference>
<dbReference type="SUPFAM" id="SSF54373">
    <property type="entry name" value="FAD-linked reductases, C-terminal domain"/>
    <property type="match status" value="1"/>
</dbReference>
<dbReference type="SUPFAM" id="SSF51905">
    <property type="entry name" value="FAD/NAD(P)-binding domain"/>
    <property type="match status" value="1"/>
</dbReference>
<dbReference type="PROSITE" id="PS00977">
    <property type="entry name" value="FAD_G3PDH_1"/>
    <property type="match status" value="1"/>
</dbReference>
<dbReference type="PROSITE" id="PS00978">
    <property type="entry name" value="FAD_G3PDH_2"/>
    <property type="match status" value="1"/>
</dbReference>
<accession>Q2FYZ4</accession>
<evidence type="ECO:0000250" key="1"/>
<evidence type="ECO:0000255" key="2"/>
<evidence type="ECO:0000305" key="3"/>
<gene>
    <name type="primary">glpD</name>
    <name type="ordered locus">SAOUHSC_01278</name>
</gene>
<feature type="chain" id="PRO_0000270057" description="Aerobic glycerol-3-phosphate dehydrogenase">
    <location>
        <begin position="1"/>
        <end position="557"/>
    </location>
</feature>
<feature type="binding site" evidence="2">
    <location>
        <begin position="21"/>
        <end position="49"/>
    </location>
    <ligand>
        <name>FAD</name>
        <dbReference type="ChEBI" id="CHEBI:57692"/>
    </ligand>
</feature>
<proteinExistence type="inferred from homology"/>